<organism>
    <name type="scientific">Staphylococcus aureus (strain N315)</name>
    <dbReference type="NCBI Taxonomy" id="158879"/>
    <lineage>
        <taxon>Bacteria</taxon>
        <taxon>Bacillati</taxon>
        <taxon>Bacillota</taxon>
        <taxon>Bacilli</taxon>
        <taxon>Bacillales</taxon>
        <taxon>Staphylococcaceae</taxon>
        <taxon>Staphylococcus</taxon>
    </lineage>
</organism>
<keyword id="KW-0028">Amino-acid biosynthesis</keyword>
<keyword id="KW-0055">Arginine biosynthesis</keyword>
<keyword id="KW-0067">ATP-binding</keyword>
<keyword id="KW-0315">Glutamine amidotransferase</keyword>
<keyword id="KW-0436">Ligase</keyword>
<keyword id="KW-0547">Nucleotide-binding</keyword>
<keyword id="KW-0665">Pyrimidine biosynthesis</keyword>
<evidence type="ECO:0000255" key="1">
    <source>
        <dbReference type="HAMAP-Rule" id="MF_01209"/>
    </source>
</evidence>
<feature type="chain" id="PRO_0000112317" description="Carbamoyl phosphate synthase small chain">
    <location>
        <begin position="1"/>
        <end position="366"/>
    </location>
</feature>
<feature type="domain" description="Glutamine amidotransferase type-1" evidence="1">
    <location>
        <begin position="173"/>
        <end position="360"/>
    </location>
</feature>
<feature type="region of interest" description="CPSase" evidence="1">
    <location>
        <begin position="1"/>
        <end position="171"/>
    </location>
</feature>
<feature type="active site" description="Nucleophile" evidence="1">
    <location>
        <position position="248"/>
    </location>
</feature>
<feature type="active site" evidence="1">
    <location>
        <position position="333"/>
    </location>
</feature>
<feature type="active site" evidence="1">
    <location>
        <position position="335"/>
    </location>
</feature>
<feature type="binding site" evidence="1">
    <location>
        <position position="47"/>
    </location>
    <ligand>
        <name>L-glutamine</name>
        <dbReference type="ChEBI" id="CHEBI:58359"/>
    </ligand>
</feature>
<feature type="binding site" evidence="1">
    <location>
        <position position="221"/>
    </location>
    <ligand>
        <name>L-glutamine</name>
        <dbReference type="ChEBI" id="CHEBI:58359"/>
    </ligand>
</feature>
<feature type="binding site" evidence="1">
    <location>
        <position position="223"/>
    </location>
    <ligand>
        <name>L-glutamine</name>
        <dbReference type="ChEBI" id="CHEBI:58359"/>
    </ligand>
</feature>
<feature type="binding site" evidence="1">
    <location>
        <position position="249"/>
    </location>
    <ligand>
        <name>L-glutamine</name>
        <dbReference type="ChEBI" id="CHEBI:58359"/>
    </ligand>
</feature>
<feature type="binding site" evidence="1">
    <location>
        <position position="252"/>
    </location>
    <ligand>
        <name>L-glutamine</name>
        <dbReference type="ChEBI" id="CHEBI:58359"/>
    </ligand>
</feature>
<feature type="binding site" evidence="1">
    <location>
        <position position="290"/>
    </location>
    <ligand>
        <name>L-glutamine</name>
        <dbReference type="ChEBI" id="CHEBI:58359"/>
    </ligand>
</feature>
<feature type="binding site" evidence="1">
    <location>
        <position position="292"/>
    </location>
    <ligand>
        <name>L-glutamine</name>
        <dbReference type="ChEBI" id="CHEBI:58359"/>
    </ligand>
</feature>
<feature type="binding site" evidence="1">
    <location>
        <position position="293"/>
    </location>
    <ligand>
        <name>L-glutamine</name>
        <dbReference type="ChEBI" id="CHEBI:58359"/>
    </ligand>
</feature>
<reference key="1">
    <citation type="journal article" date="2001" name="Lancet">
        <title>Whole genome sequencing of meticillin-resistant Staphylococcus aureus.</title>
        <authorList>
            <person name="Kuroda M."/>
            <person name="Ohta T."/>
            <person name="Uchiyama I."/>
            <person name="Baba T."/>
            <person name="Yuzawa H."/>
            <person name="Kobayashi I."/>
            <person name="Cui L."/>
            <person name="Oguchi A."/>
            <person name="Aoki K."/>
            <person name="Nagai Y."/>
            <person name="Lian J.-Q."/>
            <person name="Ito T."/>
            <person name="Kanamori M."/>
            <person name="Matsumaru H."/>
            <person name="Maruyama A."/>
            <person name="Murakami H."/>
            <person name="Hosoyama A."/>
            <person name="Mizutani-Ui Y."/>
            <person name="Takahashi N.K."/>
            <person name="Sawano T."/>
            <person name="Inoue R."/>
            <person name="Kaito C."/>
            <person name="Sekimizu K."/>
            <person name="Hirakawa H."/>
            <person name="Kuhara S."/>
            <person name="Goto S."/>
            <person name="Yabuzaki J."/>
            <person name="Kanehisa M."/>
            <person name="Yamashita A."/>
            <person name="Oshima K."/>
            <person name="Furuya K."/>
            <person name="Yoshino C."/>
            <person name="Shiba T."/>
            <person name="Hattori M."/>
            <person name="Ogasawara N."/>
            <person name="Hayashi H."/>
            <person name="Hiramatsu K."/>
        </authorList>
    </citation>
    <scope>NUCLEOTIDE SEQUENCE [LARGE SCALE GENOMIC DNA]</scope>
    <source>
        <strain>N315</strain>
    </source>
</reference>
<reference key="2">
    <citation type="journal article" date="2005" name="J. Microbiol. Methods">
        <title>Correlation of proteomic and transcriptomic profiles of Staphylococcus aureus during the post-exponential phase of growth.</title>
        <authorList>
            <person name="Scherl A."/>
            <person name="Francois P."/>
            <person name="Bento M."/>
            <person name="Deshusses J.M."/>
            <person name="Charbonnier Y."/>
            <person name="Converset V."/>
            <person name="Huyghe A."/>
            <person name="Walter N."/>
            <person name="Hoogland C."/>
            <person name="Appel R.D."/>
            <person name="Sanchez J.-C."/>
            <person name="Zimmermann-Ivol C.G."/>
            <person name="Corthals G.L."/>
            <person name="Hochstrasser D.F."/>
            <person name="Schrenzel J."/>
        </authorList>
    </citation>
    <scope>IDENTIFICATION BY MASS SPECTROMETRY</scope>
    <source>
        <strain>N315</strain>
    </source>
</reference>
<reference key="3">
    <citation type="submission" date="2007-10" db="UniProtKB">
        <title>Shotgun proteomic analysis of total and membrane protein extracts of S. aureus strain N315.</title>
        <authorList>
            <person name="Vaezzadeh A.R."/>
            <person name="Deshusses J."/>
            <person name="Lescuyer P."/>
            <person name="Hochstrasser D.F."/>
        </authorList>
    </citation>
    <scope>IDENTIFICATION BY MASS SPECTROMETRY [LARGE SCALE ANALYSIS]</scope>
    <source>
        <strain>N315</strain>
    </source>
</reference>
<comment type="function">
    <text evidence="1">Small subunit of the glutamine-dependent carbamoyl phosphate synthetase (CPSase). CPSase catalyzes the formation of carbamoyl phosphate from the ammonia moiety of glutamine, carbonate, and phosphate donated by ATP, constituting the first step of 2 biosynthetic pathways, one leading to arginine and/or urea and the other to pyrimidine nucleotides. The small subunit (glutamine amidotransferase) binds and cleaves glutamine to supply the large subunit with the substrate ammonia.</text>
</comment>
<comment type="catalytic activity">
    <reaction evidence="1">
        <text>hydrogencarbonate + L-glutamine + 2 ATP + H2O = carbamoyl phosphate + L-glutamate + 2 ADP + phosphate + 2 H(+)</text>
        <dbReference type="Rhea" id="RHEA:18633"/>
        <dbReference type="ChEBI" id="CHEBI:15377"/>
        <dbReference type="ChEBI" id="CHEBI:15378"/>
        <dbReference type="ChEBI" id="CHEBI:17544"/>
        <dbReference type="ChEBI" id="CHEBI:29985"/>
        <dbReference type="ChEBI" id="CHEBI:30616"/>
        <dbReference type="ChEBI" id="CHEBI:43474"/>
        <dbReference type="ChEBI" id="CHEBI:58228"/>
        <dbReference type="ChEBI" id="CHEBI:58359"/>
        <dbReference type="ChEBI" id="CHEBI:456216"/>
        <dbReference type="EC" id="6.3.5.5"/>
    </reaction>
</comment>
<comment type="catalytic activity">
    <molecule>Carbamoyl phosphate synthase small chain</molecule>
    <reaction evidence="1">
        <text>L-glutamine + H2O = L-glutamate + NH4(+)</text>
        <dbReference type="Rhea" id="RHEA:15889"/>
        <dbReference type="ChEBI" id="CHEBI:15377"/>
        <dbReference type="ChEBI" id="CHEBI:28938"/>
        <dbReference type="ChEBI" id="CHEBI:29985"/>
        <dbReference type="ChEBI" id="CHEBI:58359"/>
    </reaction>
</comment>
<comment type="pathway">
    <text evidence="1">Amino-acid biosynthesis; L-arginine biosynthesis; carbamoyl phosphate from bicarbonate: step 1/1.</text>
</comment>
<comment type="pathway">
    <text evidence="1">Pyrimidine metabolism; UMP biosynthesis via de novo pathway; (S)-dihydroorotate from bicarbonate: step 1/3.</text>
</comment>
<comment type="subunit">
    <text evidence="1">Composed of two chains; the small (or glutamine) chain promotes the hydrolysis of glutamine to ammonia, which is used by the large (or ammonia) chain to synthesize carbamoyl phosphate. Tetramer of heterodimers (alpha,beta)4.</text>
</comment>
<comment type="similarity">
    <text evidence="1">Belongs to the CarA family.</text>
</comment>
<sequence length="366" mass="40394">MQSKRYLVLEDGSFYEGYRLGSDNLTVGEIVFNTAMTGYQETISDPSYTGQIITFTYPLIGNYGINRDDFESLVPTLNGIVVKEASAHPSNFRQQKTLHDVLELHQIPGIAGVDTRSITRKIRQHGVLKAGFTDRKEDIDQLVKHLQQVELPKNEVEIVSTKTPYVSTGKDLSVVLVDFGKKQNIVRELNVRGCNVTVVPYTTTAEEILAMAPDGVMLSNGPGNPEVVECAIPMIQGILGKIPFFGICLGHQLFALSQGASSFKMKFGHRGANHPVKNLETGKVDITSQNHGYAIDIDSLKSTDLEVTHLALNDGTVEGLKHKTLPAFSVQYHPEANPGPSDSNYLFDDFVAMMTNFKEKERHINA</sequence>
<gene>
    <name evidence="1" type="primary">carA</name>
    <name type="synonym">pyrAA</name>
    <name type="ordered locus">SA1045</name>
</gene>
<accession>P99147</accession>
<accession>Q99UR6</accession>
<name>CARA_STAAN</name>
<proteinExistence type="evidence at protein level"/>
<protein>
    <recommendedName>
        <fullName evidence="1">Carbamoyl phosphate synthase small chain</fullName>
        <ecNumber evidence="1">6.3.5.5</ecNumber>
    </recommendedName>
    <alternativeName>
        <fullName evidence="1">Carbamoyl phosphate synthetase glutamine chain</fullName>
    </alternativeName>
</protein>
<dbReference type="EC" id="6.3.5.5" evidence="1"/>
<dbReference type="EMBL" id="BA000018">
    <property type="protein sequence ID" value="BAB42297.1"/>
    <property type="molecule type" value="Genomic_DNA"/>
</dbReference>
<dbReference type="PIR" id="E89892">
    <property type="entry name" value="E89892"/>
</dbReference>
<dbReference type="RefSeq" id="WP_001190913.1">
    <property type="nucleotide sequence ID" value="NC_002745.2"/>
</dbReference>
<dbReference type="SMR" id="P99147"/>
<dbReference type="EnsemblBacteria" id="BAB42297">
    <property type="protein sequence ID" value="BAB42297"/>
    <property type="gene ID" value="BAB42297"/>
</dbReference>
<dbReference type="KEGG" id="sau:SA1045"/>
<dbReference type="HOGENOM" id="CLU_035901_2_1_9"/>
<dbReference type="UniPathway" id="UPA00068">
    <property type="reaction ID" value="UER00171"/>
</dbReference>
<dbReference type="UniPathway" id="UPA00070">
    <property type="reaction ID" value="UER00115"/>
</dbReference>
<dbReference type="GO" id="GO:0005524">
    <property type="term" value="F:ATP binding"/>
    <property type="evidence" value="ECO:0007669"/>
    <property type="project" value="UniProtKB-UniRule"/>
</dbReference>
<dbReference type="GO" id="GO:0004088">
    <property type="term" value="F:carbamoyl-phosphate synthase (glutamine-hydrolyzing) activity"/>
    <property type="evidence" value="ECO:0007669"/>
    <property type="project" value="UniProtKB-UniRule"/>
</dbReference>
<dbReference type="GO" id="GO:0004359">
    <property type="term" value="F:glutaminase activity"/>
    <property type="evidence" value="ECO:0007669"/>
    <property type="project" value="RHEA"/>
</dbReference>
<dbReference type="GO" id="GO:0006207">
    <property type="term" value="P:'de novo' pyrimidine nucleobase biosynthetic process"/>
    <property type="evidence" value="ECO:0007669"/>
    <property type="project" value="InterPro"/>
</dbReference>
<dbReference type="GO" id="GO:0044205">
    <property type="term" value="P:'de novo' UMP biosynthetic process"/>
    <property type="evidence" value="ECO:0007669"/>
    <property type="project" value="UniProtKB-UniRule"/>
</dbReference>
<dbReference type="GO" id="GO:0006541">
    <property type="term" value="P:glutamine metabolic process"/>
    <property type="evidence" value="ECO:0007669"/>
    <property type="project" value="InterPro"/>
</dbReference>
<dbReference type="GO" id="GO:0006526">
    <property type="term" value="P:L-arginine biosynthetic process"/>
    <property type="evidence" value="ECO:0007669"/>
    <property type="project" value="UniProtKB-UniRule"/>
</dbReference>
<dbReference type="CDD" id="cd01744">
    <property type="entry name" value="GATase1_CPSase"/>
    <property type="match status" value="1"/>
</dbReference>
<dbReference type="FunFam" id="3.40.50.880:FF:000029">
    <property type="entry name" value="Carbamoyl-phosphate synthase small chain"/>
    <property type="match status" value="1"/>
</dbReference>
<dbReference type="FunFam" id="3.50.30.20:FF:000001">
    <property type="entry name" value="Carbamoyl-phosphate synthase small chain"/>
    <property type="match status" value="1"/>
</dbReference>
<dbReference type="Gene3D" id="3.40.50.880">
    <property type="match status" value="1"/>
</dbReference>
<dbReference type="Gene3D" id="3.50.30.20">
    <property type="entry name" value="Carbamoyl-phosphate synthase small subunit, N-terminal domain"/>
    <property type="match status" value="1"/>
</dbReference>
<dbReference type="HAMAP" id="MF_01209">
    <property type="entry name" value="CPSase_S_chain"/>
    <property type="match status" value="1"/>
</dbReference>
<dbReference type="InterPro" id="IPR050472">
    <property type="entry name" value="Anth_synth/Amidotransfase"/>
</dbReference>
<dbReference type="InterPro" id="IPR006274">
    <property type="entry name" value="CarbamoylP_synth_ssu"/>
</dbReference>
<dbReference type="InterPro" id="IPR002474">
    <property type="entry name" value="CarbamoylP_synth_ssu_N"/>
</dbReference>
<dbReference type="InterPro" id="IPR036480">
    <property type="entry name" value="CarbP_synth_ssu_N_sf"/>
</dbReference>
<dbReference type="InterPro" id="IPR029062">
    <property type="entry name" value="Class_I_gatase-like"/>
</dbReference>
<dbReference type="InterPro" id="IPR035686">
    <property type="entry name" value="CPSase_GATase1"/>
</dbReference>
<dbReference type="InterPro" id="IPR017926">
    <property type="entry name" value="GATASE"/>
</dbReference>
<dbReference type="NCBIfam" id="TIGR01368">
    <property type="entry name" value="CPSaseIIsmall"/>
    <property type="match status" value="1"/>
</dbReference>
<dbReference type="NCBIfam" id="NF009475">
    <property type="entry name" value="PRK12838.1"/>
    <property type="match status" value="1"/>
</dbReference>
<dbReference type="PANTHER" id="PTHR43418:SF7">
    <property type="entry name" value="CARBAMOYL-PHOSPHATE SYNTHASE SMALL CHAIN"/>
    <property type="match status" value="1"/>
</dbReference>
<dbReference type="PANTHER" id="PTHR43418">
    <property type="entry name" value="MULTIFUNCTIONAL TRYPTOPHAN BIOSYNTHESIS PROTEIN-RELATED"/>
    <property type="match status" value="1"/>
</dbReference>
<dbReference type="Pfam" id="PF00988">
    <property type="entry name" value="CPSase_sm_chain"/>
    <property type="match status" value="1"/>
</dbReference>
<dbReference type="Pfam" id="PF00117">
    <property type="entry name" value="GATase"/>
    <property type="match status" value="1"/>
</dbReference>
<dbReference type="PRINTS" id="PR00097">
    <property type="entry name" value="ANTSNTHASEII"/>
</dbReference>
<dbReference type="PRINTS" id="PR00099">
    <property type="entry name" value="CPSGATASE"/>
</dbReference>
<dbReference type="PRINTS" id="PR00096">
    <property type="entry name" value="GATASE"/>
</dbReference>
<dbReference type="SMART" id="SM01097">
    <property type="entry name" value="CPSase_sm_chain"/>
    <property type="match status" value="1"/>
</dbReference>
<dbReference type="SUPFAM" id="SSF52021">
    <property type="entry name" value="Carbamoyl phosphate synthetase, small subunit N-terminal domain"/>
    <property type="match status" value="1"/>
</dbReference>
<dbReference type="SUPFAM" id="SSF52317">
    <property type="entry name" value="Class I glutamine amidotransferase-like"/>
    <property type="match status" value="1"/>
</dbReference>
<dbReference type="PROSITE" id="PS51273">
    <property type="entry name" value="GATASE_TYPE_1"/>
    <property type="match status" value="1"/>
</dbReference>